<reference key="1">
    <citation type="journal article" date="2019" name="Nat. Commun.">
        <title>Repeated evolution of cytochrome P450-mediated spiroketal steroid biosynthesis in plants.</title>
        <authorList>
            <person name="Christ B."/>
            <person name="Xu C."/>
            <person name="Xu M."/>
            <person name="Li F.-S."/>
            <person name="Wada N."/>
            <person name="Mitchell A.J."/>
            <person name="Han X.-L."/>
            <person name="Wen M.-L."/>
            <person name="Fujita M."/>
            <person name="Weng J.-K."/>
        </authorList>
    </citation>
    <scope>NUCLEOTIDE SEQUENCE [MRNA]</scope>
    <scope>FUNCTION</scope>
    <scope>CATALYTIC ACTIVITY</scope>
    <scope>PATHWAY</scope>
    <scope>BIOTECHNOLOGY</scope>
    <scope>TISSUE SPECIFICITY</scope>
    <source>
        <tissue>Flower</tissue>
        <tissue>Leaf</tissue>
        <tissue>Pod</tissue>
        <tissue>Stem</tissue>
    </source>
</reference>
<feature type="chain" id="PRO_0000456406" description="Cytochrome P450 CYP82J17">
    <location>
        <begin position="1"/>
        <end position="523"/>
    </location>
</feature>
<feature type="transmembrane region" description="Helical" evidence="2">
    <location>
        <begin position="4"/>
        <end position="24"/>
    </location>
</feature>
<feature type="binding site" description="axial binding residue" evidence="1">
    <location>
        <position position="462"/>
    </location>
    <ligand>
        <name>heme</name>
        <dbReference type="ChEBI" id="CHEBI:30413"/>
    </ligand>
    <ligandPart>
        <name>Fe</name>
        <dbReference type="ChEBI" id="CHEBI:18248"/>
    </ligandPart>
</feature>
<gene>
    <name evidence="4" type="primary">CYP82J17</name>
</gene>
<name>82J17_TRIFG</name>
<proteinExistence type="evidence at protein level"/>
<comment type="function">
    <text evidence="3">Involved in the biosynthesis of spiroketal steroid and saponin natural products from cholesterol such as diosgenin and analogs (e.g. furostanol and spirostanol), plant defense compounds used as main precursors for the industrial production of steroid hormones (PubMed:31324795). During the 5,6-spiroketalization of cholesterol, may catalyze the 27-monohydroxylation of furostanol-type steroid to an intermediate product that undergoes a stereospecific formation of the terminal heterocycle to yield diosgenin (PubMed:31324795).</text>
</comment>
<comment type="pathway">
    <text evidence="3">Steroid metabolism; cholesterol metabolism.</text>
</comment>
<comment type="subcellular location">
    <subcellularLocation>
        <location evidence="2">Membrane</location>
        <topology evidence="2">Single-pass membrane protein</topology>
    </subcellularLocation>
</comment>
<comment type="tissue specificity">
    <text evidence="3">Mainly expressed in leaves and seed pods and, to a lower extent, in flowers and stems.</text>
</comment>
<comment type="biotechnology">
    <text evidence="3">The coexpression of CYP90B50 and CYP82J17 in the yeast strain RH6829, which was engineered to accumulate cholesterol, leads to the production of diosgenin, the main precursor for the industrial production of steroid hormones.</text>
</comment>
<comment type="similarity">
    <text evidence="5">Belongs to the cytochrome P450 family.</text>
</comment>
<keyword id="KW-0153">Cholesterol metabolism</keyword>
<keyword id="KW-0349">Heme</keyword>
<keyword id="KW-0408">Iron</keyword>
<keyword id="KW-0444">Lipid biosynthesis</keyword>
<keyword id="KW-0443">Lipid metabolism</keyword>
<keyword id="KW-0472">Membrane</keyword>
<keyword id="KW-0479">Metal-binding</keyword>
<keyword id="KW-0503">Monooxygenase</keyword>
<keyword id="KW-0560">Oxidoreductase</keyword>
<keyword id="KW-0752">Steroid biosynthesis</keyword>
<keyword id="KW-0753">Steroid metabolism</keyword>
<keyword id="KW-1207">Sterol metabolism</keyword>
<keyword id="KW-0812">Transmembrane</keyword>
<keyword id="KW-1133">Transmembrane helix</keyword>
<evidence type="ECO:0000250" key="1">
    <source>
        <dbReference type="UniProtKB" id="P04798"/>
    </source>
</evidence>
<evidence type="ECO:0000255" key="2"/>
<evidence type="ECO:0000269" key="3">
    <source>
    </source>
</evidence>
<evidence type="ECO:0000303" key="4">
    <source>
    </source>
</evidence>
<evidence type="ECO:0000305" key="5"/>
<dbReference type="EC" id="1.14.14.-" evidence="3"/>
<dbReference type="EMBL" id="MK636709">
    <property type="protein sequence ID" value="QDS03635.1"/>
    <property type="molecule type" value="mRNA"/>
</dbReference>
<dbReference type="SMR" id="A0A517FND1"/>
<dbReference type="UniPathway" id="UPA00296"/>
<dbReference type="GO" id="GO:0016020">
    <property type="term" value="C:membrane"/>
    <property type="evidence" value="ECO:0007669"/>
    <property type="project" value="UniProtKB-SubCell"/>
</dbReference>
<dbReference type="GO" id="GO:0020037">
    <property type="term" value="F:heme binding"/>
    <property type="evidence" value="ECO:0007669"/>
    <property type="project" value="InterPro"/>
</dbReference>
<dbReference type="GO" id="GO:0005506">
    <property type="term" value="F:iron ion binding"/>
    <property type="evidence" value="ECO:0007669"/>
    <property type="project" value="InterPro"/>
</dbReference>
<dbReference type="GO" id="GO:0004497">
    <property type="term" value="F:monooxygenase activity"/>
    <property type="evidence" value="ECO:0007669"/>
    <property type="project" value="UniProtKB-KW"/>
</dbReference>
<dbReference type="GO" id="GO:0016705">
    <property type="term" value="F:oxidoreductase activity, acting on paired donors, with incorporation or reduction of molecular oxygen"/>
    <property type="evidence" value="ECO:0000314"/>
    <property type="project" value="UniProtKB"/>
</dbReference>
<dbReference type="GO" id="GO:0008203">
    <property type="term" value="P:cholesterol metabolic process"/>
    <property type="evidence" value="ECO:0000314"/>
    <property type="project" value="UniProtKB"/>
</dbReference>
<dbReference type="GO" id="GO:0016135">
    <property type="term" value="P:saponin biosynthetic process"/>
    <property type="evidence" value="ECO:0000314"/>
    <property type="project" value="UniProtKB"/>
</dbReference>
<dbReference type="GO" id="GO:0006694">
    <property type="term" value="P:steroid biosynthetic process"/>
    <property type="evidence" value="ECO:0000314"/>
    <property type="project" value="UniProtKB"/>
</dbReference>
<dbReference type="FunFam" id="1.10.630.10:FF:000026">
    <property type="entry name" value="Cytochrome P450 82C4"/>
    <property type="match status" value="1"/>
</dbReference>
<dbReference type="Gene3D" id="1.10.630.10">
    <property type="entry name" value="Cytochrome P450"/>
    <property type="match status" value="1"/>
</dbReference>
<dbReference type="InterPro" id="IPR001128">
    <property type="entry name" value="Cyt_P450"/>
</dbReference>
<dbReference type="InterPro" id="IPR017972">
    <property type="entry name" value="Cyt_P450_CS"/>
</dbReference>
<dbReference type="InterPro" id="IPR002401">
    <property type="entry name" value="Cyt_P450_E_grp-I"/>
</dbReference>
<dbReference type="InterPro" id="IPR036396">
    <property type="entry name" value="Cyt_P450_sf"/>
</dbReference>
<dbReference type="InterPro" id="IPR050651">
    <property type="entry name" value="Plant_Cytochrome_P450_Monoox"/>
</dbReference>
<dbReference type="PANTHER" id="PTHR47947">
    <property type="entry name" value="CYTOCHROME P450 82C3-RELATED"/>
    <property type="match status" value="1"/>
</dbReference>
<dbReference type="PANTHER" id="PTHR47947:SF1">
    <property type="entry name" value="CYTOCHROME P450 82E3"/>
    <property type="match status" value="1"/>
</dbReference>
<dbReference type="Pfam" id="PF00067">
    <property type="entry name" value="p450"/>
    <property type="match status" value="1"/>
</dbReference>
<dbReference type="PRINTS" id="PR00463">
    <property type="entry name" value="EP450I"/>
</dbReference>
<dbReference type="PRINTS" id="PR00385">
    <property type="entry name" value="P450"/>
</dbReference>
<dbReference type="SUPFAM" id="SSF48264">
    <property type="entry name" value="Cytochrome P450"/>
    <property type="match status" value="1"/>
</dbReference>
<dbReference type="PROSITE" id="PS00086">
    <property type="entry name" value="CYTOCHROME_P450"/>
    <property type="match status" value="1"/>
</dbReference>
<protein>
    <recommendedName>
        <fullName evidence="4">Cytochrome P450 CYP82J17</fullName>
        <shortName evidence="4">PpCYP82J17</shortName>
        <ecNumber evidence="3">1.14.14.-</ecNumber>
    </recommendedName>
</protein>
<organism>
    <name type="scientific">Trigonella foenum-graecum</name>
    <name type="common">Fenugreek</name>
    <dbReference type="NCBI Taxonomy" id="78534"/>
    <lineage>
        <taxon>Eukaryota</taxon>
        <taxon>Viridiplantae</taxon>
        <taxon>Streptophyta</taxon>
        <taxon>Embryophyta</taxon>
        <taxon>Tracheophyta</taxon>
        <taxon>Spermatophyta</taxon>
        <taxon>Magnoliopsida</taxon>
        <taxon>eudicotyledons</taxon>
        <taxon>Gunneridae</taxon>
        <taxon>Pentapetalae</taxon>
        <taxon>rosids</taxon>
        <taxon>fabids</taxon>
        <taxon>Fabales</taxon>
        <taxon>Fabaceae</taxon>
        <taxon>Papilionoideae</taxon>
        <taxon>50 kb inversion clade</taxon>
        <taxon>NPAAA clade</taxon>
        <taxon>Hologalegina</taxon>
        <taxon>IRL clade</taxon>
        <taxon>Trifolieae</taxon>
        <taxon>Trigonella</taxon>
    </lineage>
</organism>
<sequence>MDSFLSQPITIVLAILSVLLYNIWKIRKPSNKFQKGMKLPQLSFALPLIGHLHLLGNQIPLAKTFASFADKYGPIFQIRLGAYPTLVISNKEAIKECFTTNDKILASRTKSTHGILLGYNHASFACAPYGRFWAKIRKVTMLELLSSRRVESLRHVYESEIDTLVKDLSLYVKVGKVEVVISEWMERLTFNIITKMICGKRYFEYLQDVDDVEANGNIVKLIKEVMHISGELVPKDVIPILGWFGFEGEVLKSMKRVSRDLDEVVGKWVEEHIEKSDDGVNNSNEKQDLIDVMLSVIEDDPDSGNDRDTIIKANIVNLMIAGSDTTSTTMTWILVLLLNNMNALKRAQEEIDQHIGRDRKIESSDIKNLVYLQAIVKETLRLHPTLPLSIPHEATEDCNIQGYYVPKGTRLFTNVWKLHRDPSIWLEPEKFSPERFINENGEIDHESHQFEYLPFGLGRRACPGSMFATQVIHIAVARLIHLFDFEVPINEVVDMKQGTGLILSKFTPLKVLLTPRLPYELYQ</sequence>
<accession>A0A517FND1</accession>